<comment type="function">
    <text evidence="1">Catalyzes the reversible phosphorylation of S-methyl-5'-thioinosine (MTI) to hypoxanthine and 5-methylthioribose-1-phosphate. Involved in the breakdown of S-methyl-5'-thioadenosine (MTA), a major by-product of polyamine biosynthesis. Catabolism of (MTA) occurs via deamination to MTI and phosphorolysis to hypoxanthine.</text>
</comment>
<comment type="catalytic activity">
    <reaction evidence="1">
        <text>S-methyl-5'-thioinosine + phosphate = 5-(methylsulfanyl)-alpha-D-ribose 1-phosphate + hypoxanthine</text>
        <dbReference type="Rhea" id="RHEA:30643"/>
        <dbReference type="ChEBI" id="CHEBI:17368"/>
        <dbReference type="ChEBI" id="CHEBI:43474"/>
        <dbReference type="ChEBI" id="CHEBI:48595"/>
        <dbReference type="ChEBI" id="CHEBI:58533"/>
        <dbReference type="EC" id="2.4.2.44"/>
    </reaction>
</comment>
<comment type="pathway">
    <text evidence="1">Purine metabolism; purine nucleoside salvage.</text>
</comment>
<comment type="subunit">
    <text evidence="1">Homotrimer.</text>
</comment>
<comment type="miscellaneous">
    <text evidence="1">Although this enzyme belongs to the family of MTA phosphorylases based on sequence homology, it has been shown that conserved amino acid substitutions in the substrate binding pocket convert the substrate specificity of this enzyme from 6-aminopurines to 6-oxopurines.</text>
</comment>
<comment type="similarity">
    <text evidence="1">Belongs to the PNP/MTAP phosphorylase family. MTAP subfamily.</text>
</comment>
<keyword id="KW-0328">Glycosyltransferase</keyword>
<keyword id="KW-0660">Purine salvage</keyword>
<keyword id="KW-1185">Reference proteome</keyword>
<keyword id="KW-0808">Transferase</keyword>
<sequence length="246" mass="26388">MTVYAIIGGTGLTQLEGLNIRQSLPMNTPYGAPSGEIQIGDYAGREVMFLARHGHPHRLPPHQVNYRANIWALKQAGAEAILAVNAVGGIHPAMGTGHFCVPHDLVDYTSGRQHTFFADDLEEVTHIDFSYPYSEALRVRLVAALAAEGCAFSDRGVYACTQGPRLETVAEIIRLERDGCDIVGMTGMPEAALARELELEYACLALVVNPAAGKSTAVITMAEIEQALRDGMGKVKATLARVLSAS</sequence>
<reference key="1">
    <citation type="journal article" date="2003" name="Proc. Natl. Acad. Sci. U.S.A.">
        <title>The complete genome sequence of the Arabidopsis and tomato pathogen Pseudomonas syringae pv. tomato DC3000.</title>
        <authorList>
            <person name="Buell C.R."/>
            <person name="Joardar V."/>
            <person name="Lindeberg M."/>
            <person name="Selengut J."/>
            <person name="Paulsen I.T."/>
            <person name="Gwinn M.L."/>
            <person name="Dodson R.J."/>
            <person name="DeBoy R.T."/>
            <person name="Durkin A.S."/>
            <person name="Kolonay J.F."/>
            <person name="Madupu R."/>
            <person name="Daugherty S.C."/>
            <person name="Brinkac L.M."/>
            <person name="Beanan M.J."/>
            <person name="Haft D.H."/>
            <person name="Nelson W.C."/>
            <person name="Davidsen T.M."/>
            <person name="Zafar N."/>
            <person name="Zhou L."/>
            <person name="Liu J."/>
            <person name="Yuan Q."/>
            <person name="Khouri H.M."/>
            <person name="Fedorova N.B."/>
            <person name="Tran B."/>
            <person name="Russell D."/>
            <person name="Berry K.J."/>
            <person name="Utterback T.R."/>
            <person name="Van Aken S.E."/>
            <person name="Feldblyum T.V."/>
            <person name="D'Ascenzo M."/>
            <person name="Deng W.-L."/>
            <person name="Ramos A.R."/>
            <person name="Alfano J.R."/>
            <person name="Cartinhour S."/>
            <person name="Chatterjee A.K."/>
            <person name="Delaney T.P."/>
            <person name="Lazarowitz S.G."/>
            <person name="Martin G.B."/>
            <person name="Schneider D.J."/>
            <person name="Tang X."/>
            <person name="Bender C.L."/>
            <person name="White O."/>
            <person name="Fraser C.M."/>
            <person name="Collmer A."/>
        </authorList>
    </citation>
    <scope>NUCLEOTIDE SEQUENCE [LARGE SCALE GENOMIC DNA]</scope>
    <source>
        <strain>ATCC BAA-871 / DC3000</strain>
    </source>
</reference>
<gene>
    <name type="ordered locus">PSPTO_3506</name>
</gene>
<accession>Q87ZC3</accession>
<organism>
    <name type="scientific">Pseudomonas syringae pv. tomato (strain ATCC BAA-871 / DC3000)</name>
    <dbReference type="NCBI Taxonomy" id="223283"/>
    <lineage>
        <taxon>Bacteria</taxon>
        <taxon>Pseudomonadati</taxon>
        <taxon>Pseudomonadota</taxon>
        <taxon>Gammaproteobacteria</taxon>
        <taxon>Pseudomonadales</taxon>
        <taxon>Pseudomonadaceae</taxon>
        <taxon>Pseudomonas</taxon>
    </lineage>
</organism>
<name>MTIP_PSESM</name>
<feature type="chain" id="PRO_0000184552" description="Probable S-methyl-5'-thioinosine phosphorylase">
    <location>
        <begin position="1"/>
        <end position="246"/>
    </location>
</feature>
<feature type="binding site" evidence="1">
    <location>
        <position position="10"/>
    </location>
    <ligand>
        <name>phosphate</name>
        <dbReference type="ChEBI" id="CHEBI:43474"/>
    </ligand>
</feature>
<feature type="binding site" evidence="1">
    <location>
        <begin position="52"/>
        <end position="53"/>
    </location>
    <ligand>
        <name>phosphate</name>
        <dbReference type="ChEBI" id="CHEBI:43474"/>
    </ligand>
</feature>
<feature type="binding site" evidence="1">
    <location>
        <position position="185"/>
    </location>
    <ligand>
        <name>substrate</name>
    </ligand>
</feature>
<feature type="binding site" evidence="1">
    <location>
        <position position="186"/>
    </location>
    <ligand>
        <name>phosphate</name>
        <dbReference type="ChEBI" id="CHEBI:43474"/>
    </ligand>
</feature>
<feature type="binding site" evidence="1">
    <location>
        <begin position="209"/>
        <end position="211"/>
    </location>
    <ligand>
        <name>substrate</name>
    </ligand>
</feature>
<feature type="site" description="Important for substrate specificity" evidence="1">
    <location>
        <position position="167"/>
    </location>
</feature>
<feature type="site" description="Important for substrate specificity" evidence="1">
    <location>
        <position position="221"/>
    </location>
</feature>
<dbReference type="EC" id="2.4.2.44" evidence="1"/>
<dbReference type="EMBL" id="AE016853">
    <property type="protein sequence ID" value="AAO56981.1"/>
    <property type="molecule type" value="Genomic_DNA"/>
</dbReference>
<dbReference type="RefSeq" id="NP_793286.1">
    <property type="nucleotide sequence ID" value="NC_004578.1"/>
</dbReference>
<dbReference type="RefSeq" id="WP_005765040.1">
    <property type="nucleotide sequence ID" value="NC_004578.1"/>
</dbReference>
<dbReference type="SMR" id="Q87ZC3"/>
<dbReference type="STRING" id="223283.PSPTO_3506"/>
<dbReference type="GeneID" id="1185171"/>
<dbReference type="KEGG" id="pst:PSPTO_3506"/>
<dbReference type="PATRIC" id="fig|223283.9.peg.3591"/>
<dbReference type="eggNOG" id="COG0005">
    <property type="taxonomic scope" value="Bacteria"/>
</dbReference>
<dbReference type="HOGENOM" id="CLU_054456_0_2_6"/>
<dbReference type="OrthoDB" id="1523230at2"/>
<dbReference type="PhylomeDB" id="Q87ZC3"/>
<dbReference type="UniPathway" id="UPA00606"/>
<dbReference type="Proteomes" id="UP000002515">
    <property type="component" value="Chromosome"/>
</dbReference>
<dbReference type="GO" id="GO:0005829">
    <property type="term" value="C:cytosol"/>
    <property type="evidence" value="ECO:0007669"/>
    <property type="project" value="TreeGrafter"/>
</dbReference>
<dbReference type="GO" id="GO:0017061">
    <property type="term" value="F:S-methyl-5-thioadenosine phosphorylase activity"/>
    <property type="evidence" value="ECO:0007669"/>
    <property type="project" value="InterPro"/>
</dbReference>
<dbReference type="GO" id="GO:0019509">
    <property type="term" value="P:L-methionine salvage from methylthioadenosine"/>
    <property type="evidence" value="ECO:0007669"/>
    <property type="project" value="TreeGrafter"/>
</dbReference>
<dbReference type="GO" id="GO:0006166">
    <property type="term" value="P:purine ribonucleoside salvage"/>
    <property type="evidence" value="ECO:0007669"/>
    <property type="project" value="UniProtKB-UniRule"/>
</dbReference>
<dbReference type="CDD" id="cd09010">
    <property type="entry name" value="MTAP_SsMTAPII_like_MTIP"/>
    <property type="match status" value="1"/>
</dbReference>
<dbReference type="Gene3D" id="3.40.50.1580">
    <property type="entry name" value="Nucleoside phosphorylase domain"/>
    <property type="match status" value="1"/>
</dbReference>
<dbReference type="HAMAP" id="MF_01963">
    <property type="entry name" value="MTAP"/>
    <property type="match status" value="1"/>
</dbReference>
<dbReference type="InterPro" id="IPR010044">
    <property type="entry name" value="MTAP"/>
</dbReference>
<dbReference type="InterPro" id="IPR000845">
    <property type="entry name" value="Nucleoside_phosphorylase_d"/>
</dbReference>
<dbReference type="InterPro" id="IPR035994">
    <property type="entry name" value="Nucleoside_phosphorylase_sf"/>
</dbReference>
<dbReference type="InterPro" id="IPR018099">
    <property type="entry name" value="Purine_phosphorylase-2_CS"/>
</dbReference>
<dbReference type="NCBIfam" id="TIGR01694">
    <property type="entry name" value="MTAP"/>
    <property type="match status" value="1"/>
</dbReference>
<dbReference type="NCBIfam" id="NF006599">
    <property type="entry name" value="PRK09136.1"/>
    <property type="match status" value="1"/>
</dbReference>
<dbReference type="PANTHER" id="PTHR42679">
    <property type="entry name" value="S-METHYL-5'-THIOADENOSINE PHOSPHORYLASE"/>
    <property type="match status" value="1"/>
</dbReference>
<dbReference type="PANTHER" id="PTHR42679:SF2">
    <property type="entry name" value="S-METHYL-5'-THIOADENOSINE PHOSPHORYLASE"/>
    <property type="match status" value="1"/>
</dbReference>
<dbReference type="Pfam" id="PF01048">
    <property type="entry name" value="PNP_UDP_1"/>
    <property type="match status" value="1"/>
</dbReference>
<dbReference type="SUPFAM" id="SSF53167">
    <property type="entry name" value="Purine and uridine phosphorylases"/>
    <property type="match status" value="1"/>
</dbReference>
<dbReference type="PROSITE" id="PS01240">
    <property type="entry name" value="PNP_MTAP_2"/>
    <property type="match status" value="1"/>
</dbReference>
<evidence type="ECO:0000255" key="1">
    <source>
        <dbReference type="HAMAP-Rule" id="MF_01963"/>
    </source>
</evidence>
<protein>
    <recommendedName>
        <fullName evidence="1">Probable S-methyl-5'-thioinosine phosphorylase</fullName>
        <ecNumber evidence="1">2.4.2.44</ecNumber>
    </recommendedName>
    <alternativeName>
        <fullName evidence="1">5'-methylthioinosine phosphorylase</fullName>
        <shortName evidence="1">MTI phosphorylase</shortName>
        <shortName evidence="1">MTIP</shortName>
    </alternativeName>
</protein>
<proteinExistence type="inferred from homology"/>